<proteinExistence type="inferred from homology"/>
<accession>Q8Z4C4</accession>
<sequence length="377" mass="41149">MSRGIIIIGSGFAARQLVKNIRKQDAHVPLTLIAADSMDEYNKPDLSHVISQSQRADDLTRQLAGEFAEQFNLRLFPHTWVTDIDADAHVVKSQDKQWQYDKLVLTTGATAFVPPIAGRELMLTLNSQQEYRACETPLRDAQRVLIVGGGLIGSELAMDFCRAGKTVTLMDNAASLLASLMPPEVSSRLQHHLTDMGVHLLLKSQLQKLEKTEAGIRATLVSQHSIEVDAVIAATGLRPETALARRAGVAVNRGVCVDSYLQTSHPDIYAIGDCAEINGQVLPFLQPIQLSAMYLAKNLLGGNAPLKLPAMLVKVKTPELPLHLAGETQRRDLSWQITAESDGMIAKGMSGEGQLRAFVVSEDRMKEAFALLKTLSV</sequence>
<gene>
    <name evidence="1" type="primary">norW</name>
    <name evidence="1" type="synonym">flrR</name>
    <name type="ordered locus">STY2963</name>
    <name type="ordered locus">t2743</name>
</gene>
<dbReference type="EC" id="1.18.1.-" evidence="1"/>
<dbReference type="EMBL" id="AL513382">
    <property type="protein sequence ID" value="CAD05948.1"/>
    <property type="molecule type" value="Genomic_DNA"/>
</dbReference>
<dbReference type="EMBL" id="AE014613">
    <property type="protein sequence ID" value="AAO70304.1"/>
    <property type="molecule type" value="Genomic_DNA"/>
</dbReference>
<dbReference type="RefSeq" id="NP_457235.1">
    <property type="nucleotide sequence ID" value="NC_003198.1"/>
</dbReference>
<dbReference type="RefSeq" id="WP_000086352.1">
    <property type="nucleotide sequence ID" value="NZ_WSUR01000005.1"/>
</dbReference>
<dbReference type="SMR" id="Q8Z4C4"/>
<dbReference type="STRING" id="220341.gene:17586858"/>
<dbReference type="KEGG" id="stt:t2743"/>
<dbReference type="KEGG" id="sty:STY2963"/>
<dbReference type="PATRIC" id="fig|220341.7.peg.3017"/>
<dbReference type="eggNOG" id="COG0446">
    <property type="taxonomic scope" value="Bacteria"/>
</dbReference>
<dbReference type="HOGENOM" id="CLU_003291_4_4_6"/>
<dbReference type="OMA" id="IHHFWTF"/>
<dbReference type="OrthoDB" id="9808980at2"/>
<dbReference type="UniPathway" id="UPA00638"/>
<dbReference type="Proteomes" id="UP000000541">
    <property type="component" value="Chromosome"/>
</dbReference>
<dbReference type="Proteomes" id="UP000002670">
    <property type="component" value="Chromosome"/>
</dbReference>
<dbReference type="GO" id="GO:0005737">
    <property type="term" value="C:cytoplasm"/>
    <property type="evidence" value="ECO:0007669"/>
    <property type="project" value="UniProtKB-SubCell"/>
</dbReference>
<dbReference type="GO" id="GO:0016731">
    <property type="term" value="F:oxidoreductase activity, acting on iron-sulfur proteins as donors, NAD or NADP as acceptor"/>
    <property type="evidence" value="ECO:0007669"/>
    <property type="project" value="UniProtKB-UniRule"/>
</dbReference>
<dbReference type="Gene3D" id="3.30.390.120">
    <property type="match status" value="1"/>
</dbReference>
<dbReference type="Gene3D" id="3.50.50.60">
    <property type="entry name" value="FAD/NAD(P)-binding domain"/>
    <property type="match status" value="2"/>
</dbReference>
<dbReference type="HAMAP" id="MF_01313">
    <property type="entry name" value="NorW"/>
    <property type="match status" value="1"/>
</dbReference>
<dbReference type="InterPro" id="IPR050260">
    <property type="entry name" value="FAD-bd_OxRdtase"/>
</dbReference>
<dbReference type="InterPro" id="IPR036188">
    <property type="entry name" value="FAD/NAD-bd_sf"/>
</dbReference>
<dbReference type="InterPro" id="IPR023753">
    <property type="entry name" value="FAD/NAD-binding_dom"/>
</dbReference>
<dbReference type="InterPro" id="IPR023961">
    <property type="entry name" value="NO_rdtase_NorW"/>
</dbReference>
<dbReference type="InterPro" id="IPR041364">
    <property type="entry name" value="Rbx-bd"/>
</dbReference>
<dbReference type="NCBIfam" id="NF003437">
    <property type="entry name" value="PRK04965.1"/>
    <property type="match status" value="1"/>
</dbReference>
<dbReference type="PANTHER" id="PTHR43429:SF3">
    <property type="entry name" value="NITRITE REDUCTASE [NAD(P)H]"/>
    <property type="match status" value="1"/>
</dbReference>
<dbReference type="PANTHER" id="PTHR43429">
    <property type="entry name" value="PYRIDINE NUCLEOTIDE-DISULFIDE OXIDOREDUCTASE DOMAIN-CONTAINING"/>
    <property type="match status" value="1"/>
</dbReference>
<dbReference type="Pfam" id="PF07992">
    <property type="entry name" value="Pyr_redox_2"/>
    <property type="match status" value="1"/>
</dbReference>
<dbReference type="Pfam" id="PF18113">
    <property type="entry name" value="Rbx_binding"/>
    <property type="match status" value="1"/>
</dbReference>
<dbReference type="PRINTS" id="PR00368">
    <property type="entry name" value="FADPNR"/>
</dbReference>
<dbReference type="PRINTS" id="PR00411">
    <property type="entry name" value="PNDRDTASEI"/>
</dbReference>
<dbReference type="SUPFAM" id="SSF51905">
    <property type="entry name" value="FAD/NAD(P)-binding domain"/>
    <property type="match status" value="1"/>
</dbReference>
<keyword id="KW-0963">Cytoplasm</keyword>
<keyword id="KW-0274">FAD</keyword>
<keyword id="KW-0285">Flavoprotein</keyword>
<keyword id="KW-0520">NAD</keyword>
<keyword id="KW-0560">Oxidoreductase</keyword>
<name>NORW_SALTI</name>
<reference key="1">
    <citation type="journal article" date="2001" name="Nature">
        <title>Complete genome sequence of a multiple drug resistant Salmonella enterica serovar Typhi CT18.</title>
        <authorList>
            <person name="Parkhill J."/>
            <person name="Dougan G."/>
            <person name="James K.D."/>
            <person name="Thomson N.R."/>
            <person name="Pickard D."/>
            <person name="Wain J."/>
            <person name="Churcher C.M."/>
            <person name="Mungall K.L."/>
            <person name="Bentley S.D."/>
            <person name="Holden M.T.G."/>
            <person name="Sebaihia M."/>
            <person name="Baker S."/>
            <person name="Basham D."/>
            <person name="Brooks K."/>
            <person name="Chillingworth T."/>
            <person name="Connerton P."/>
            <person name="Cronin A."/>
            <person name="Davis P."/>
            <person name="Davies R.M."/>
            <person name="Dowd L."/>
            <person name="White N."/>
            <person name="Farrar J."/>
            <person name="Feltwell T."/>
            <person name="Hamlin N."/>
            <person name="Haque A."/>
            <person name="Hien T.T."/>
            <person name="Holroyd S."/>
            <person name="Jagels K."/>
            <person name="Krogh A."/>
            <person name="Larsen T.S."/>
            <person name="Leather S."/>
            <person name="Moule S."/>
            <person name="O'Gaora P."/>
            <person name="Parry C."/>
            <person name="Quail M.A."/>
            <person name="Rutherford K.M."/>
            <person name="Simmonds M."/>
            <person name="Skelton J."/>
            <person name="Stevens K."/>
            <person name="Whitehead S."/>
            <person name="Barrell B.G."/>
        </authorList>
    </citation>
    <scope>NUCLEOTIDE SEQUENCE [LARGE SCALE GENOMIC DNA]</scope>
    <source>
        <strain>CT18</strain>
    </source>
</reference>
<reference key="2">
    <citation type="journal article" date="2003" name="J. Bacteriol.">
        <title>Comparative genomics of Salmonella enterica serovar Typhi strains Ty2 and CT18.</title>
        <authorList>
            <person name="Deng W."/>
            <person name="Liou S.-R."/>
            <person name="Plunkett G. III"/>
            <person name="Mayhew G.F."/>
            <person name="Rose D.J."/>
            <person name="Burland V."/>
            <person name="Kodoyianni V."/>
            <person name="Schwartz D.C."/>
            <person name="Blattner F.R."/>
        </authorList>
    </citation>
    <scope>NUCLEOTIDE SEQUENCE [LARGE SCALE GENOMIC DNA]</scope>
    <source>
        <strain>ATCC 700931 / Ty2</strain>
    </source>
</reference>
<evidence type="ECO:0000255" key="1">
    <source>
        <dbReference type="HAMAP-Rule" id="MF_01313"/>
    </source>
</evidence>
<protein>
    <recommendedName>
        <fullName evidence="1">Nitric oxide reductase FlRd-NAD(+) reductase</fullName>
        <ecNumber evidence="1">1.18.1.-</ecNumber>
    </recommendedName>
    <alternativeName>
        <fullName evidence="1">Flavorubredoxin reductase</fullName>
        <shortName evidence="1">FlRd-reductase</shortName>
        <shortName evidence="1">FlavoRb reductase</shortName>
    </alternativeName>
</protein>
<organism>
    <name type="scientific">Salmonella typhi</name>
    <dbReference type="NCBI Taxonomy" id="90370"/>
    <lineage>
        <taxon>Bacteria</taxon>
        <taxon>Pseudomonadati</taxon>
        <taxon>Pseudomonadota</taxon>
        <taxon>Gammaproteobacteria</taxon>
        <taxon>Enterobacterales</taxon>
        <taxon>Enterobacteriaceae</taxon>
        <taxon>Salmonella</taxon>
    </lineage>
</organism>
<comment type="function">
    <text evidence="1">One of at least two accessory proteins for anaerobic nitric oxide (NO) reductase. Reduces the rubredoxin moiety of NO reductase.</text>
</comment>
<comment type="catalytic activity">
    <reaction evidence="1">
        <text>2 reduced [nitric oxide reductase rubredoxin domain] + NAD(+) + H(+) = 2 oxidized [nitric oxide reductase rubredoxin domain] + NADH</text>
        <dbReference type="Rhea" id="RHEA:42960"/>
        <dbReference type="Rhea" id="RHEA-COMP:10304"/>
        <dbReference type="Rhea" id="RHEA-COMP:10305"/>
        <dbReference type="ChEBI" id="CHEBI:15378"/>
        <dbReference type="ChEBI" id="CHEBI:29033"/>
        <dbReference type="ChEBI" id="CHEBI:29034"/>
        <dbReference type="ChEBI" id="CHEBI:57540"/>
        <dbReference type="ChEBI" id="CHEBI:57945"/>
    </reaction>
</comment>
<comment type="cofactor">
    <cofactor evidence="1">
        <name>FAD</name>
        <dbReference type="ChEBI" id="CHEBI:57692"/>
    </cofactor>
</comment>
<comment type="pathway">
    <text evidence="1">Nitrogen metabolism; nitric oxide reduction.</text>
</comment>
<comment type="subcellular location">
    <subcellularLocation>
        <location evidence="1">Cytoplasm</location>
    </subcellularLocation>
</comment>
<comment type="similarity">
    <text evidence="1">Belongs to the FAD-dependent oxidoreductase family.</text>
</comment>
<feature type="chain" id="PRO_0000167666" description="Nitric oxide reductase FlRd-NAD(+) reductase">
    <location>
        <begin position="1"/>
        <end position="377"/>
    </location>
</feature>